<dbReference type="EMBL" id="CP000890">
    <property type="protein sequence ID" value="ABX78653.1"/>
    <property type="molecule type" value="Genomic_DNA"/>
</dbReference>
<dbReference type="RefSeq" id="WP_005772102.1">
    <property type="nucleotide sequence ID" value="NC_010117.1"/>
</dbReference>
<dbReference type="SMR" id="A9N9A2"/>
<dbReference type="KEGG" id="cbs:COXBURSA331_A1754"/>
<dbReference type="HOGENOM" id="CLU_087936_0_0_6"/>
<dbReference type="GO" id="GO:0005737">
    <property type="term" value="C:cytoplasm"/>
    <property type="evidence" value="ECO:0007669"/>
    <property type="project" value="UniProtKB-SubCell"/>
</dbReference>
<dbReference type="GO" id="GO:0009379">
    <property type="term" value="C:Holliday junction helicase complex"/>
    <property type="evidence" value="ECO:0007669"/>
    <property type="project" value="InterPro"/>
</dbReference>
<dbReference type="GO" id="GO:0048476">
    <property type="term" value="C:Holliday junction resolvase complex"/>
    <property type="evidence" value="ECO:0007669"/>
    <property type="project" value="UniProtKB-UniRule"/>
</dbReference>
<dbReference type="GO" id="GO:0005524">
    <property type="term" value="F:ATP binding"/>
    <property type="evidence" value="ECO:0007669"/>
    <property type="project" value="InterPro"/>
</dbReference>
<dbReference type="GO" id="GO:0000400">
    <property type="term" value="F:four-way junction DNA binding"/>
    <property type="evidence" value="ECO:0007669"/>
    <property type="project" value="UniProtKB-UniRule"/>
</dbReference>
<dbReference type="GO" id="GO:0009378">
    <property type="term" value="F:four-way junction helicase activity"/>
    <property type="evidence" value="ECO:0007669"/>
    <property type="project" value="InterPro"/>
</dbReference>
<dbReference type="GO" id="GO:0006310">
    <property type="term" value="P:DNA recombination"/>
    <property type="evidence" value="ECO:0007669"/>
    <property type="project" value="UniProtKB-UniRule"/>
</dbReference>
<dbReference type="GO" id="GO:0006281">
    <property type="term" value="P:DNA repair"/>
    <property type="evidence" value="ECO:0007669"/>
    <property type="project" value="UniProtKB-UniRule"/>
</dbReference>
<dbReference type="CDD" id="cd14332">
    <property type="entry name" value="UBA_RuvA_C"/>
    <property type="match status" value="1"/>
</dbReference>
<dbReference type="Gene3D" id="1.10.150.20">
    <property type="entry name" value="5' to 3' exonuclease, C-terminal subdomain"/>
    <property type="match status" value="1"/>
</dbReference>
<dbReference type="Gene3D" id="1.10.8.10">
    <property type="entry name" value="DNA helicase RuvA subunit, C-terminal domain"/>
    <property type="match status" value="1"/>
</dbReference>
<dbReference type="Gene3D" id="2.40.50.140">
    <property type="entry name" value="Nucleic acid-binding proteins"/>
    <property type="match status" value="1"/>
</dbReference>
<dbReference type="HAMAP" id="MF_00031">
    <property type="entry name" value="DNA_HJ_migration_RuvA"/>
    <property type="match status" value="1"/>
</dbReference>
<dbReference type="InterPro" id="IPR013849">
    <property type="entry name" value="DNA_helicase_Holl-junc_RuvA_I"/>
</dbReference>
<dbReference type="InterPro" id="IPR003583">
    <property type="entry name" value="Hlx-hairpin-Hlx_DNA-bd_motif"/>
</dbReference>
<dbReference type="InterPro" id="IPR012340">
    <property type="entry name" value="NA-bd_OB-fold"/>
</dbReference>
<dbReference type="InterPro" id="IPR000085">
    <property type="entry name" value="RuvA"/>
</dbReference>
<dbReference type="InterPro" id="IPR010994">
    <property type="entry name" value="RuvA_2-like"/>
</dbReference>
<dbReference type="InterPro" id="IPR011114">
    <property type="entry name" value="RuvA_C"/>
</dbReference>
<dbReference type="InterPro" id="IPR036267">
    <property type="entry name" value="RuvA_C_sf"/>
</dbReference>
<dbReference type="NCBIfam" id="TIGR00084">
    <property type="entry name" value="ruvA"/>
    <property type="match status" value="1"/>
</dbReference>
<dbReference type="Pfam" id="PF14520">
    <property type="entry name" value="HHH_5"/>
    <property type="match status" value="1"/>
</dbReference>
<dbReference type="Pfam" id="PF07499">
    <property type="entry name" value="RuvA_C"/>
    <property type="match status" value="1"/>
</dbReference>
<dbReference type="Pfam" id="PF01330">
    <property type="entry name" value="RuvA_N"/>
    <property type="match status" value="1"/>
</dbReference>
<dbReference type="SMART" id="SM00278">
    <property type="entry name" value="HhH1"/>
    <property type="match status" value="2"/>
</dbReference>
<dbReference type="SUPFAM" id="SSF46929">
    <property type="entry name" value="DNA helicase RuvA subunit, C-terminal domain"/>
    <property type="match status" value="1"/>
</dbReference>
<dbReference type="SUPFAM" id="SSF50249">
    <property type="entry name" value="Nucleic acid-binding proteins"/>
    <property type="match status" value="1"/>
</dbReference>
<dbReference type="SUPFAM" id="SSF47781">
    <property type="entry name" value="RuvA domain 2-like"/>
    <property type="match status" value="1"/>
</dbReference>
<evidence type="ECO:0000255" key="1">
    <source>
        <dbReference type="HAMAP-Rule" id="MF_00031"/>
    </source>
</evidence>
<evidence type="ECO:0000256" key="2">
    <source>
        <dbReference type="SAM" id="MobiDB-lite"/>
    </source>
</evidence>
<keyword id="KW-0963">Cytoplasm</keyword>
<keyword id="KW-0227">DNA damage</keyword>
<keyword id="KW-0233">DNA recombination</keyword>
<keyword id="KW-0234">DNA repair</keyword>
<keyword id="KW-0238">DNA-binding</keyword>
<feature type="chain" id="PRO_1000074419" description="Holliday junction branch migration complex subunit RuvA">
    <location>
        <begin position="1"/>
        <end position="200"/>
    </location>
</feature>
<feature type="region of interest" description="Domain I" evidence="1">
    <location>
        <begin position="1"/>
        <end position="64"/>
    </location>
</feature>
<feature type="region of interest" description="Domain II" evidence="1">
    <location>
        <begin position="65"/>
        <end position="143"/>
    </location>
</feature>
<feature type="region of interest" description="Disordered" evidence="2">
    <location>
        <begin position="133"/>
        <end position="152"/>
    </location>
</feature>
<feature type="region of interest" description="Flexible linker" evidence="1">
    <location>
        <begin position="144"/>
        <end position="148"/>
    </location>
</feature>
<feature type="region of interest" description="Domain III" evidence="1">
    <location>
        <begin position="149"/>
        <end position="200"/>
    </location>
</feature>
<sequence length="200" mass="22225">MIGHLRGIIVEKQPPYLLLEVAGVGYEITAPLSTFYHLPEPQEEILLYTHLIVREDAHTLYGFHNDHERRLFRALIKVNGVGPKLALAILSGIGPDEFVHCVLNQNIDQLVRIPGVGRKTAERLVIETKDGLSRWHTNDTPSPEGLRSSNTQPTQDAISALMALGYKPQEAKRAIDAIQKPDLSAETLIRLALKQMVLGT</sequence>
<reference key="1">
    <citation type="submission" date="2007-11" db="EMBL/GenBank/DDBJ databases">
        <title>Genome sequencing of phylogenetically and phenotypically diverse Coxiella burnetii isolates.</title>
        <authorList>
            <person name="Seshadri R."/>
            <person name="Samuel J.E."/>
        </authorList>
    </citation>
    <scope>NUCLEOTIDE SEQUENCE [LARGE SCALE GENOMIC DNA]</scope>
    <source>
        <strain>RSA 331 / Henzerling II</strain>
    </source>
</reference>
<protein>
    <recommendedName>
        <fullName evidence="1">Holliday junction branch migration complex subunit RuvA</fullName>
    </recommendedName>
</protein>
<proteinExistence type="inferred from homology"/>
<gene>
    <name evidence="1" type="primary">ruvA</name>
    <name type="ordered locus">COXBURSA331_A1754</name>
</gene>
<name>RUVA_COXBR</name>
<accession>A9N9A2</accession>
<comment type="function">
    <text evidence="1">The RuvA-RuvB-RuvC complex processes Holliday junction (HJ) DNA during genetic recombination and DNA repair, while the RuvA-RuvB complex plays an important role in the rescue of blocked DNA replication forks via replication fork reversal (RFR). RuvA specifically binds to HJ cruciform DNA, conferring on it an open structure. The RuvB hexamer acts as an ATP-dependent pump, pulling dsDNA into and through the RuvAB complex. HJ branch migration allows RuvC to scan DNA until it finds its consensus sequence, where it cleaves and resolves the cruciform DNA.</text>
</comment>
<comment type="subunit">
    <text evidence="1">Homotetramer. Forms an RuvA(8)-RuvB(12)-Holliday junction (HJ) complex. HJ DNA is sandwiched between 2 RuvA tetramers; dsDNA enters through RuvA and exits via RuvB. An RuvB hexamer assembles on each DNA strand where it exits the tetramer. Each RuvB hexamer is contacted by two RuvA subunits (via domain III) on 2 adjacent RuvB subunits; this complex drives branch migration. In the full resolvosome a probable DNA-RuvA(4)-RuvB(12)-RuvC(2) complex forms which resolves the HJ.</text>
</comment>
<comment type="subcellular location">
    <subcellularLocation>
        <location evidence="1">Cytoplasm</location>
    </subcellularLocation>
</comment>
<comment type="domain">
    <text evidence="1">Has three domains with a flexible linker between the domains II and III and assumes an 'L' shape. Domain III is highly mobile and contacts RuvB.</text>
</comment>
<comment type="similarity">
    <text evidence="1">Belongs to the RuvA family.</text>
</comment>
<organism>
    <name type="scientific">Coxiella burnetii (strain RSA 331 / Henzerling II)</name>
    <dbReference type="NCBI Taxonomy" id="360115"/>
    <lineage>
        <taxon>Bacteria</taxon>
        <taxon>Pseudomonadati</taxon>
        <taxon>Pseudomonadota</taxon>
        <taxon>Gammaproteobacteria</taxon>
        <taxon>Legionellales</taxon>
        <taxon>Coxiellaceae</taxon>
        <taxon>Coxiella</taxon>
    </lineage>
</organism>